<organism>
    <name type="scientific">Escherichia coli O157:H7</name>
    <dbReference type="NCBI Taxonomy" id="83334"/>
    <lineage>
        <taxon>Bacteria</taxon>
        <taxon>Pseudomonadati</taxon>
        <taxon>Pseudomonadota</taxon>
        <taxon>Gammaproteobacteria</taxon>
        <taxon>Enterobacterales</taxon>
        <taxon>Enterobacteriaceae</taxon>
        <taxon>Escherichia</taxon>
    </lineage>
</organism>
<sequence>MNNDVFPNKFKAALAAKQVQIGCWSALSNPISTEVLGLAGFDWLVLDGEHAPNDISTFIPQLMALKGSASAPVVRVPTNEPVIIKRLLDIGFYNFLIPFVETKEEAEQAVASTRYPPEGIRGVSVSHRANMFGTVADYFAQSNKNITILVQIESQQGVDNVDAIAATEGVDGIFVGPSDLAAALGHLGNASHPDVQKAIQHIFNRASAHGKPSGILAPVEADARRYLEWGATFVAVGSDLGVFRSATQKLADTFKK</sequence>
<comment type="function">
    <text evidence="1">Catalyzes the reversible retro-aldol cleavage of both 5-keto-4-deoxy-D-glucarate and 2-keto-3-deoxy-D-glucarate to pyruvate and tartronic semialdehyde.</text>
</comment>
<comment type="catalytic activity">
    <reaction evidence="1">
        <text>5-dehydro-4-deoxy-D-glucarate = 2-hydroxy-3-oxopropanoate + pyruvate</text>
        <dbReference type="Rhea" id="RHEA:27726"/>
        <dbReference type="ChEBI" id="CHEBI:15361"/>
        <dbReference type="ChEBI" id="CHEBI:42819"/>
        <dbReference type="ChEBI" id="CHEBI:57978"/>
    </reaction>
</comment>
<comment type="catalytic activity">
    <reaction evidence="1">
        <text>2-dehydro-3-deoxy-D-glucarate = 2-hydroxy-3-oxopropanoate + pyruvate</text>
        <dbReference type="Rhea" id="RHEA:10268"/>
        <dbReference type="ChEBI" id="CHEBI:15361"/>
        <dbReference type="ChEBI" id="CHEBI:57978"/>
        <dbReference type="ChEBI" id="CHEBI:58098"/>
        <dbReference type="EC" id="4.1.2.20"/>
    </reaction>
</comment>
<comment type="cofactor">
    <cofactor evidence="1">
        <name>Mg(2+)</name>
        <dbReference type="ChEBI" id="CHEBI:18420"/>
    </cofactor>
    <text evidence="1">Binds 1 Mg(2+) ion per subunit.</text>
</comment>
<comment type="pathway">
    <text evidence="1">Carbohydrate acid metabolism; galactarate degradation; D-glycerate from galactarate: step 2/3.</text>
</comment>
<comment type="subunit">
    <text evidence="1">Homohexamer; trimer of dimers.</text>
</comment>
<comment type="similarity">
    <text evidence="1">Belongs to the HpcH/HpaI aldolase family. KDGluc aldolase subfamily.</text>
</comment>
<reference key="1">
    <citation type="journal article" date="2001" name="Nature">
        <title>Genome sequence of enterohaemorrhagic Escherichia coli O157:H7.</title>
        <authorList>
            <person name="Perna N.T."/>
            <person name="Plunkett G. III"/>
            <person name="Burland V."/>
            <person name="Mau B."/>
            <person name="Glasner J.D."/>
            <person name="Rose D.J."/>
            <person name="Mayhew G.F."/>
            <person name="Evans P.S."/>
            <person name="Gregor J."/>
            <person name="Kirkpatrick H.A."/>
            <person name="Posfai G."/>
            <person name="Hackett J."/>
            <person name="Klink S."/>
            <person name="Boutin A."/>
            <person name="Shao Y."/>
            <person name="Miller L."/>
            <person name="Grotbeck E.J."/>
            <person name="Davis N.W."/>
            <person name="Lim A."/>
            <person name="Dimalanta E.T."/>
            <person name="Potamousis K."/>
            <person name="Apodaca J."/>
            <person name="Anantharaman T.S."/>
            <person name="Lin J."/>
            <person name="Yen G."/>
            <person name="Schwartz D.C."/>
            <person name="Welch R.A."/>
            <person name="Blattner F.R."/>
        </authorList>
    </citation>
    <scope>NUCLEOTIDE SEQUENCE [LARGE SCALE GENOMIC DNA]</scope>
    <source>
        <strain>O157:H7 / EDL933 / ATCC 700927 / EHEC</strain>
    </source>
</reference>
<reference key="2">
    <citation type="journal article" date="2001" name="DNA Res.">
        <title>Complete genome sequence of enterohemorrhagic Escherichia coli O157:H7 and genomic comparison with a laboratory strain K-12.</title>
        <authorList>
            <person name="Hayashi T."/>
            <person name="Makino K."/>
            <person name="Ohnishi M."/>
            <person name="Kurokawa K."/>
            <person name="Ishii K."/>
            <person name="Yokoyama K."/>
            <person name="Han C.-G."/>
            <person name="Ohtsubo E."/>
            <person name="Nakayama K."/>
            <person name="Murata T."/>
            <person name="Tanaka M."/>
            <person name="Tobe T."/>
            <person name="Iida T."/>
            <person name="Takami H."/>
            <person name="Honda T."/>
            <person name="Sasakawa C."/>
            <person name="Ogasawara N."/>
            <person name="Yasunaga T."/>
            <person name="Kuhara S."/>
            <person name="Shiba T."/>
            <person name="Hattori M."/>
            <person name="Shinagawa H."/>
        </authorList>
    </citation>
    <scope>NUCLEOTIDE SEQUENCE [LARGE SCALE GENOMIC DNA]</scope>
    <source>
        <strain>O157:H7 / Sakai / RIMD 0509952 / EHEC</strain>
    </source>
</reference>
<keyword id="KW-0456">Lyase</keyword>
<keyword id="KW-0460">Magnesium</keyword>
<keyword id="KW-0479">Metal-binding</keyword>
<keyword id="KW-1185">Reference proteome</keyword>
<feature type="chain" id="PRO_0000353147" description="5-keto-4-deoxy-D-glucarate aldolase">
    <location>
        <begin position="1"/>
        <end position="256"/>
    </location>
</feature>
<feature type="active site" description="Proton acceptor" evidence="1">
    <location>
        <position position="50"/>
    </location>
</feature>
<feature type="binding site" evidence="1">
    <location>
        <position position="151"/>
    </location>
    <ligand>
        <name>substrate</name>
    </ligand>
</feature>
<feature type="binding site" evidence="1">
    <location>
        <position position="153"/>
    </location>
    <ligand>
        <name>Mg(2+)</name>
        <dbReference type="ChEBI" id="CHEBI:18420"/>
    </ligand>
</feature>
<feature type="binding site" evidence="1">
    <location>
        <position position="178"/>
    </location>
    <ligand>
        <name>substrate</name>
    </ligand>
</feature>
<feature type="binding site" evidence="1">
    <location>
        <position position="179"/>
    </location>
    <ligand>
        <name>Mg(2+)</name>
        <dbReference type="ChEBI" id="CHEBI:18420"/>
    </ligand>
</feature>
<feature type="binding site" evidence="1">
    <location>
        <position position="179"/>
    </location>
    <ligand>
        <name>substrate</name>
    </ligand>
</feature>
<feature type="site" description="Transition state stabilizer" evidence="1">
    <location>
        <position position="75"/>
    </location>
</feature>
<feature type="site" description="Increases basicity of active site His" evidence="1">
    <location>
        <position position="89"/>
    </location>
</feature>
<accession>Q8XAE3</accession>
<accession>Q7AAL1</accession>
<name>GARL_ECO57</name>
<gene>
    <name evidence="1" type="primary">garL</name>
    <name type="ordered locus">Z4478</name>
    <name type="ordered locus">ECs4004</name>
</gene>
<proteinExistence type="inferred from homology"/>
<dbReference type="EC" id="4.1.2.20" evidence="1"/>
<dbReference type="EMBL" id="AE005174">
    <property type="protein sequence ID" value="AAG58256.1"/>
    <property type="molecule type" value="Genomic_DNA"/>
</dbReference>
<dbReference type="EMBL" id="BA000007">
    <property type="protein sequence ID" value="BAB37427.1"/>
    <property type="molecule type" value="Genomic_DNA"/>
</dbReference>
<dbReference type="PIR" id="D85974">
    <property type="entry name" value="D85974"/>
</dbReference>
<dbReference type="PIR" id="D91129">
    <property type="entry name" value="D91129"/>
</dbReference>
<dbReference type="RefSeq" id="NP_312031.1">
    <property type="nucleotide sequence ID" value="NC_002695.1"/>
</dbReference>
<dbReference type="RefSeq" id="WP_001058227.1">
    <property type="nucleotide sequence ID" value="NZ_VOAI01000009.1"/>
</dbReference>
<dbReference type="SMR" id="Q8XAE3"/>
<dbReference type="STRING" id="155864.Z4478"/>
<dbReference type="GeneID" id="916159"/>
<dbReference type="GeneID" id="93778860"/>
<dbReference type="KEGG" id="ece:Z4478"/>
<dbReference type="KEGG" id="ecs:ECs_4004"/>
<dbReference type="PATRIC" id="fig|386585.9.peg.4178"/>
<dbReference type="eggNOG" id="COG3836">
    <property type="taxonomic scope" value="Bacteria"/>
</dbReference>
<dbReference type="HOGENOM" id="CLU_059964_1_0_6"/>
<dbReference type="OMA" id="HQVQIGC"/>
<dbReference type="UniPathway" id="UPA00565">
    <property type="reaction ID" value="UER00630"/>
</dbReference>
<dbReference type="Proteomes" id="UP000000558">
    <property type="component" value="Chromosome"/>
</dbReference>
<dbReference type="Proteomes" id="UP000002519">
    <property type="component" value="Chromosome"/>
</dbReference>
<dbReference type="GO" id="GO:0005737">
    <property type="term" value="C:cytoplasm"/>
    <property type="evidence" value="ECO:0007669"/>
    <property type="project" value="TreeGrafter"/>
</dbReference>
<dbReference type="GO" id="GO:0008672">
    <property type="term" value="F:2-dehydro-3-deoxyglucarate aldolase activity"/>
    <property type="evidence" value="ECO:0007669"/>
    <property type="project" value="UniProtKB-UniRule"/>
</dbReference>
<dbReference type="GO" id="GO:0000287">
    <property type="term" value="F:magnesium ion binding"/>
    <property type="evidence" value="ECO:0007669"/>
    <property type="project" value="UniProtKB-UniRule"/>
</dbReference>
<dbReference type="GO" id="GO:0042838">
    <property type="term" value="P:D-glucarate catabolic process"/>
    <property type="evidence" value="ECO:0007669"/>
    <property type="project" value="UniProtKB-UniRule"/>
</dbReference>
<dbReference type="GO" id="GO:0046392">
    <property type="term" value="P:galactarate catabolic process"/>
    <property type="evidence" value="ECO:0007669"/>
    <property type="project" value="UniProtKB-UniRule"/>
</dbReference>
<dbReference type="FunFam" id="3.20.20.60:FF:000004">
    <property type="entry name" value="5-keto-4-deoxy-D-glucarate aldolase"/>
    <property type="match status" value="1"/>
</dbReference>
<dbReference type="Gene3D" id="3.20.20.60">
    <property type="entry name" value="Phosphoenolpyruvate-binding domains"/>
    <property type="match status" value="1"/>
</dbReference>
<dbReference type="HAMAP" id="MF_01291">
    <property type="entry name" value="KDGluc_aldolase"/>
    <property type="match status" value="1"/>
</dbReference>
<dbReference type="InterPro" id="IPR005000">
    <property type="entry name" value="Aldolase/citrate-lyase_domain"/>
</dbReference>
<dbReference type="InterPro" id="IPR017648">
    <property type="entry name" value="GarL"/>
</dbReference>
<dbReference type="InterPro" id="IPR050251">
    <property type="entry name" value="HpcH-HpaI_aldolase"/>
</dbReference>
<dbReference type="InterPro" id="IPR015813">
    <property type="entry name" value="Pyrv/PenolPyrv_kinase-like_dom"/>
</dbReference>
<dbReference type="InterPro" id="IPR040442">
    <property type="entry name" value="Pyrv_kinase-like_dom_sf"/>
</dbReference>
<dbReference type="NCBIfam" id="TIGR03239">
    <property type="entry name" value="GarL"/>
    <property type="match status" value="1"/>
</dbReference>
<dbReference type="NCBIfam" id="NF007849">
    <property type="entry name" value="PRK10558.1"/>
    <property type="match status" value="1"/>
</dbReference>
<dbReference type="PANTHER" id="PTHR30502">
    <property type="entry name" value="2-KETO-3-DEOXY-L-RHAMNONATE ALDOLASE"/>
    <property type="match status" value="1"/>
</dbReference>
<dbReference type="PANTHER" id="PTHR30502:SF4">
    <property type="entry name" value="5-KETO-4-DEOXY-D-GLUCARATE ALDOLASE"/>
    <property type="match status" value="1"/>
</dbReference>
<dbReference type="Pfam" id="PF03328">
    <property type="entry name" value="HpcH_HpaI"/>
    <property type="match status" value="1"/>
</dbReference>
<dbReference type="SUPFAM" id="SSF51621">
    <property type="entry name" value="Phosphoenolpyruvate/pyruvate domain"/>
    <property type="match status" value="1"/>
</dbReference>
<evidence type="ECO:0000255" key="1">
    <source>
        <dbReference type="HAMAP-Rule" id="MF_01291"/>
    </source>
</evidence>
<protein>
    <recommendedName>
        <fullName evidence="1">5-keto-4-deoxy-D-glucarate aldolase</fullName>
        <shortName evidence="1">KDGluc aldolase</shortName>
        <shortName evidence="1">KDGlucA</shortName>
        <ecNumber evidence="1">4.1.2.20</ecNumber>
    </recommendedName>
    <alternativeName>
        <fullName evidence="1">2-dehydro-3-deoxy-D-glucarate aldolase</fullName>
    </alternativeName>
    <alternativeName>
        <fullName evidence="1">2-keto-3-deoxy-D-glucarate aldolase</fullName>
    </alternativeName>
    <alternativeName>
        <fullName evidence="1">5-dehydro-4-deoxy-D-glucarate aldolase</fullName>
    </alternativeName>
    <alternativeName>
        <fullName evidence="1">Alpha-keto-beta-deoxy-D-glucarate aldolase</fullName>
    </alternativeName>
</protein>